<name>UGT1_BARVU</name>
<protein>
    <recommendedName>
        <fullName evidence="4">UDP-glycosyltransferase 1</fullName>
        <shortName evidence="4">BvUGT1</shortName>
        <ecNumber evidence="3">2.4.1.368</ecNumber>
    </recommendedName>
    <alternativeName>
        <fullName evidence="5">Oleanolate 3-O-glucosyltransferase UGT1</fullName>
    </alternativeName>
</protein>
<comment type="function">
    <text evidence="3">Catalyzes the transfer of a glucose (Glc) moiety from UDP-Glc to the C-3 position of the oleanane sapogenins oleanolate and hederagenin (PubMed:23027665). The monoglucosylated hederagenin 3-O-beta-D-glucoside is a feeding deterrent of the yellow-striped flea beetle (Phyllotreta nemorum) (PubMed:23027665).</text>
</comment>
<comment type="catalytic activity">
    <reaction evidence="3">
        <text>oleanolate + UDP-alpha-D-glucose = oleanolate 3-O-beta-D-glucoside + UDP + H(+)</text>
        <dbReference type="Rhea" id="RHEA:58024"/>
        <dbReference type="ChEBI" id="CHEBI:15378"/>
        <dbReference type="ChEBI" id="CHEBI:58223"/>
        <dbReference type="ChEBI" id="CHEBI:58885"/>
        <dbReference type="ChEBI" id="CHEBI:82828"/>
        <dbReference type="ChEBI" id="CHEBI:142488"/>
        <dbReference type="EC" id="2.4.1.368"/>
    </reaction>
    <physiologicalReaction direction="left-to-right" evidence="3">
        <dbReference type="Rhea" id="RHEA:58025"/>
    </physiologicalReaction>
</comment>
<comment type="similarity">
    <text evidence="5">Belongs to the UDP-glycosyltransferase family.</text>
</comment>
<organism>
    <name type="scientific">Barbarea vulgaris</name>
    <name type="common">Yellow rocket</name>
    <name type="synonym">Erysimum barbarea</name>
    <dbReference type="NCBI Taxonomy" id="50459"/>
    <lineage>
        <taxon>Eukaryota</taxon>
        <taxon>Viridiplantae</taxon>
        <taxon>Streptophyta</taxon>
        <taxon>Embryophyta</taxon>
        <taxon>Tracheophyta</taxon>
        <taxon>Spermatophyta</taxon>
        <taxon>Magnoliopsida</taxon>
        <taxon>eudicotyledons</taxon>
        <taxon>Gunneridae</taxon>
        <taxon>Pentapetalae</taxon>
        <taxon>rosids</taxon>
        <taxon>malvids</taxon>
        <taxon>Brassicales</taxon>
        <taxon>Brassicaceae</taxon>
        <taxon>Cardamineae</taxon>
        <taxon>Barbarea</taxon>
    </lineage>
</organism>
<gene>
    <name evidence="4" type="primary">UGT1</name>
</gene>
<feature type="chain" id="PRO_0000452126" description="UDP-glycosyltransferase 1">
    <location>
        <begin position="1"/>
        <end position="495"/>
    </location>
</feature>
<feature type="active site" description="Proton acceptor" evidence="1">
    <location>
        <position position="24"/>
    </location>
</feature>
<feature type="active site" description="Charge relay" evidence="1">
    <location>
        <position position="129"/>
    </location>
</feature>
<feature type="binding site" evidence="2">
    <location>
        <position position="24"/>
    </location>
    <ligand>
        <name>an anthocyanidin</name>
        <dbReference type="ChEBI" id="CHEBI:143576"/>
    </ligand>
</feature>
<feature type="binding site" evidence="1">
    <location>
        <position position="358"/>
    </location>
    <ligand>
        <name>UDP-alpha-D-glucose</name>
        <dbReference type="ChEBI" id="CHEBI:58885"/>
    </ligand>
</feature>
<feature type="binding site" evidence="1">
    <location>
        <position position="373"/>
    </location>
    <ligand>
        <name>UDP-alpha-D-glucose</name>
        <dbReference type="ChEBI" id="CHEBI:58885"/>
    </ligand>
</feature>
<feature type="binding site" evidence="1">
    <location>
        <position position="376"/>
    </location>
    <ligand>
        <name>UDP-alpha-D-glucose</name>
        <dbReference type="ChEBI" id="CHEBI:58885"/>
    </ligand>
</feature>
<feature type="binding site" evidence="1">
    <location>
        <position position="377"/>
    </location>
    <ligand>
        <name>UDP-alpha-D-glucose</name>
        <dbReference type="ChEBI" id="CHEBI:58885"/>
    </ligand>
</feature>
<feature type="binding site" evidence="1">
    <location>
        <position position="378"/>
    </location>
    <ligand>
        <name>UDP-alpha-D-glucose</name>
        <dbReference type="ChEBI" id="CHEBI:58885"/>
    </ligand>
</feature>
<feature type="binding site" evidence="1">
    <location>
        <position position="381"/>
    </location>
    <ligand>
        <name>UDP-alpha-D-glucose</name>
        <dbReference type="ChEBI" id="CHEBI:58885"/>
    </ligand>
</feature>
<feature type="binding site" evidence="2">
    <location>
        <position position="396"/>
    </location>
    <ligand>
        <name>an anthocyanidin</name>
        <dbReference type="ChEBI" id="CHEBI:143576"/>
    </ligand>
</feature>
<feature type="binding site" evidence="1">
    <location>
        <position position="397"/>
    </location>
    <ligand>
        <name>UDP-alpha-D-glucose</name>
        <dbReference type="ChEBI" id="CHEBI:58885"/>
    </ligand>
</feature>
<feature type="binding site" evidence="1">
    <location>
        <position position="398"/>
    </location>
    <ligand>
        <name>UDP-alpha-D-glucose</name>
        <dbReference type="ChEBI" id="CHEBI:58885"/>
    </ligand>
</feature>
<proteinExistence type="evidence at protein level"/>
<reference key="1">
    <citation type="journal article" date="2012" name="Plant Physiol.">
        <title>UDP-glycosyltransferases from the UGT73C subfamily in Barbarea vulgaris catalyze sapogenin 3-O-glucosylation in saponin-mediated insect resistance.</title>
        <authorList>
            <person name="Augustin J.M."/>
            <person name="Drok S."/>
            <person name="Shinoda T."/>
            <person name="Sanmiya K."/>
            <person name="Nielsen J.K."/>
            <person name="Khakimov B."/>
            <person name="Olsen C.E."/>
            <person name="Hansen E.H."/>
            <person name="Kuzina V."/>
            <person name="Ekstrom C.T."/>
            <person name="Hauser T."/>
            <person name="Bak S."/>
        </authorList>
    </citation>
    <scope>NUCLEOTIDE SEQUENCE [MRNA]</scope>
    <scope>FUNCTION</scope>
    <scope>CATALYTIC ACTIVITY</scope>
</reference>
<accession>K4GHR9</accession>
<keyword id="KW-0328">Glycosyltransferase</keyword>
<keyword id="KW-0808">Transferase</keyword>
<sequence length="495" mass="55599">MVSEITHKSYPLHFVLFPFMAQGHMIPMVDIARLLAQRGVKITIVTTPHNAARFENVLSRAIESGLPISIVQVKLPSQEAGLPEGNETFDSLVSMELLVPFFKAVNMLEEPVQKLFEEMSPQPSCIISDFCLPYTSKIAKKFNIPKILFHGMCCFCLLCMHVLRKNREILENLKSDKEHFVVPYFPDRVEFTRPQVPMATYVPGEWHEIKEDIVEADKTSYGVIVNTYQELEPAYANDYKEARSGKAWTIGPVSLCNKVGADKAERGNKADIDQDECLKWLDSKEEGSVLYVCLGSICSLPLSQLKELGLGLEESQRPFIWVVRGWEKNKELLEWFSDSGFEERVKDRGLLIKGWSPQMLILAHHSVGGFLTHCGWNSTLEGITSGIPLLTWPLFGDQFCNQKLVVQVLKVGVSAGVEEVTNWGEEEKIGVLVDKEGVKKAVEELMGESDDAKERRKRVKELGQLAQKAVEEGGSSHSNITSLLEDIMQLAQSNN</sequence>
<evidence type="ECO:0000250" key="1">
    <source>
        <dbReference type="UniProtKB" id="A0A0A1HA03"/>
    </source>
</evidence>
<evidence type="ECO:0000250" key="2">
    <source>
        <dbReference type="UniProtKB" id="P51094"/>
    </source>
</evidence>
<evidence type="ECO:0000269" key="3">
    <source>
    </source>
</evidence>
<evidence type="ECO:0000303" key="4">
    <source>
    </source>
</evidence>
<evidence type="ECO:0000305" key="5"/>
<dbReference type="EC" id="2.4.1.368" evidence="3"/>
<dbReference type="EMBL" id="JQ291611">
    <property type="protein sequence ID" value="AFN26664.1"/>
    <property type="molecule type" value="mRNA"/>
</dbReference>
<dbReference type="SMR" id="K4GHR9"/>
<dbReference type="GO" id="GO:0035251">
    <property type="term" value="F:UDP-glucosyltransferase activity"/>
    <property type="evidence" value="ECO:0000314"/>
    <property type="project" value="UniProtKB"/>
</dbReference>
<dbReference type="GO" id="GO:0016134">
    <property type="term" value="P:saponin metabolic process"/>
    <property type="evidence" value="ECO:0000314"/>
    <property type="project" value="UniProtKB"/>
</dbReference>
<dbReference type="CDD" id="cd03784">
    <property type="entry name" value="GT1_Gtf-like"/>
    <property type="match status" value="1"/>
</dbReference>
<dbReference type="FunFam" id="3.40.50.2000:FF:000047">
    <property type="entry name" value="Glycosyltransferase"/>
    <property type="match status" value="1"/>
</dbReference>
<dbReference type="FunFam" id="3.40.50.2000:FF:000071">
    <property type="entry name" value="Glycosyltransferase"/>
    <property type="match status" value="1"/>
</dbReference>
<dbReference type="Gene3D" id="3.40.50.2000">
    <property type="entry name" value="Glycogen Phosphorylase B"/>
    <property type="match status" value="2"/>
</dbReference>
<dbReference type="InterPro" id="IPR002213">
    <property type="entry name" value="UDP_glucos_trans"/>
</dbReference>
<dbReference type="InterPro" id="IPR035595">
    <property type="entry name" value="UDP_glycos_trans_CS"/>
</dbReference>
<dbReference type="PANTHER" id="PTHR48047">
    <property type="entry name" value="GLYCOSYLTRANSFERASE"/>
    <property type="match status" value="1"/>
</dbReference>
<dbReference type="PANTHER" id="PTHR48047:SF153">
    <property type="entry name" value="UDP-GLYCOSYLTRANSFERASE 73C5-RELATED"/>
    <property type="match status" value="1"/>
</dbReference>
<dbReference type="Pfam" id="PF00201">
    <property type="entry name" value="UDPGT"/>
    <property type="match status" value="1"/>
</dbReference>
<dbReference type="SUPFAM" id="SSF53756">
    <property type="entry name" value="UDP-Glycosyltransferase/glycogen phosphorylase"/>
    <property type="match status" value="1"/>
</dbReference>
<dbReference type="PROSITE" id="PS00375">
    <property type="entry name" value="UDPGT"/>
    <property type="match status" value="1"/>
</dbReference>